<proteinExistence type="evidence at protein level"/>
<dbReference type="EC" id="3.6.1.1" evidence="6"/>
<dbReference type="EMBL" id="M81880">
    <property type="protein sequence ID" value="AAA34893.1"/>
    <property type="molecule type" value="Genomic_DNA"/>
</dbReference>
<dbReference type="EMBL" id="Z49260">
    <property type="protein sequence ID" value="CAA89250.1"/>
    <property type="molecule type" value="Genomic_DNA"/>
</dbReference>
<dbReference type="EMBL" id="BK006946">
    <property type="protein sequence ID" value="DAA10167.1"/>
    <property type="molecule type" value="Genomic_DNA"/>
</dbReference>
<dbReference type="PIR" id="A40867">
    <property type="entry name" value="A40867"/>
</dbReference>
<dbReference type="RefSeq" id="NP_013994.1">
    <property type="nucleotide sequence ID" value="NM_001182774.1"/>
</dbReference>
<dbReference type="SMR" id="P28239"/>
<dbReference type="BioGRID" id="35445">
    <property type="interactions" value="424"/>
</dbReference>
<dbReference type="DIP" id="DIP-1522N"/>
<dbReference type="FunCoup" id="P28239">
    <property type="interactions" value="334"/>
</dbReference>
<dbReference type="IntAct" id="P28239">
    <property type="interactions" value="8"/>
</dbReference>
<dbReference type="MINT" id="P28239"/>
<dbReference type="STRING" id="4932.YMR267W"/>
<dbReference type="iPTMnet" id="P28239"/>
<dbReference type="PaxDb" id="4932-YMR267W"/>
<dbReference type="PeptideAtlas" id="P28239"/>
<dbReference type="EnsemblFungi" id="YMR267W_mRNA">
    <property type="protein sequence ID" value="YMR267W"/>
    <property type="gene ID" value="YMR267W"/>
</dbReference>
<dbReference type="GeneID" id="855309"/>
<dbReference type="KEGG" id="sce:YMR267W"/>
<dbReference type="AGR" id="SGD:S000004880"/>
<dbReference type="SGD" id="S000004880">
    <property type="gene designation" value="PPA2"/>
</dbReference>
<dbReference type="VEuPathDB" id="FungiDB:YMR267W"/>
<dbReference type="eggNOG" id="KOG1626">
    <property type="taxonomic scope" value="Eukaryota"/>
</dbReference>
<dbReference type="GeneTree" id="ENSGT00390000017004"/>
<dbReference type="HOGENOM" id="CLU_040684_0_1_1"/>
<dbReference type="InParanoid" id="P28239"/>
<dbReference type="OMA" id="KEVDRWH"/>
<dbReference type="OrthoDB" id="1608002at2759"/>
<dbReference type="BioCyc" id="YEAST:YMR267W-MONOMER"/>
<dbReference type="Reactome" id="R-SCE-379726">
    <property type="pathway name" value="Mitochondrial tRNA aminoacylation"/>
</dbReference>
<dbReference type="Reactome" id="R-SCE-71737">
    <property type="pathway name" value="Pyrophosphate hydrolysis"/>
</dbReference>
<dbReference type="BioGRID-ORCS" id="855309">
    <property type="hits" value="1 hit in 10 CRISPR screens"/>
</dbReference>
<dbReference type="PRO" id="PR:P28239"/>
<dbReference type="Proteomes" id="UP000002311">
    <property type="component" value="Chromosome XIII"/>
</dbReference>
<dbReference type="RNAct" id="P28239">
    <property type="molecule type" value="protein"/>
</dbReference>
<dbReference type="GO" id="GO:0005739">
    <property type="term" value="C:mitochondrion"/>
    <property type="evidence" value="ECO:0000315"/>
    <property type="project" value="SGD"/>
</dbReference>
<dbReference type="GO" id="GO:0004427">
    <property type="term" value="F:inorganic diphosphate phosphatase activity"/>
    <property type="evidence" value="ECO:0000315"/>
    <property type="project" value="SGD"/>
</dbReference>
<dbReference type="GO" id="GO:0000287">
    <property type="term" value="F:magnesium ion binding"/>
    <property type="evidence" value="ECO:0007669"/>
    <property type="project" value="InterPro"/>
</dbReference>
<dbReference type="GO" id="GO:0009060">
    <property type="term" value="P:aerobic respiration"/>
    <property type="evidence" value="ECO:0000315"/>
    <property type="project" value="SGD"/>
</dbReference>
<dbReference type="GO" id="GO:0006796">
    <property type="term" value="P:phosphate-containing compound metabolic process"/>
    <property type="evidence" value="ECO:0000318"/>
    <property type="project" value="GO_Central"/>
</dbReference>
<dbReference type="CDD" id="cd00412">
    <property type="entry name" value="pyrophosphatase"/>
    <property type="match status" value="1"/>
</dbReference>
<dbReference type="FunFam" id="3.90.80.10:FF:000007">
    <property type="entry name" value="Inorganic pyrophosphatase, mitochondrial"/>
    <property type="match status" value="1"/>
</dbReference>
<dbReference type="Gene3D" id="3.90.80.10">
    <property type="entry name" value="Inorganic pyrophosphatase"/>
    <property type="match status" value="1"/>
</dbReference>
<dbReference type="InterPro" id="IPR008162">
    <property type="entry name" value="Pyrophosphatase"/>
</dbReference>
<dbReference type="InterPro" id="IPR036649">
    <property type="entry name" value="Pyrophosphatase_sf"/>
</dbReference>
<dbReference type="PANTHER" id="PTHR10286">
    <property type="entry name" value="INORGANIC PYROPHOSPHATASE"/>
    <property type="match status" value="1"/>
</dbReference>
<dbReference type="Pfam" id="PF00719">
    <property type="entry name" value="Pyrophosphatase"/>
    <property type="match status" value="1"/>
</dbReference>
<dbReference type="SUPFAM" id="SSF50324">
    <property type="entry name" value="Inorganic pyrophosphatase"/>
    <property type="match status" value="1"/>
</dbReference>
<dbReference type="PROSITE" id="PS00387">
    <property type="entry name" value="PPASE"/>
    <property type="match status" value="1"/>
</dbReference>
<reference key="1">
    <citation type="journal article" date="1991" name="J. Biol. Chem.">
        <title>Yeast PPA2 gene encodes a mitochondrial inorganic pyrophosphatase that is essential for mitochondrial function.</title>
        <authorList>
            <person name="Lundin M."/>
            <person name="Baltscheffsky H."/>
            <person name="Ronne H."/>
        </authorList>
    </citation>
    <scope>NUCLEOTIDE SEQUENCE [GENOMIC DNA]</scope>
    <scope>FUNCTION</scope>
    <scope>CATALYTIC ACTIVITY</scope>
    <source>
        <strain>ATCC 208353 / W303-1A</strain>
    </source>
</reference>
<reference key="2">
    <citation type="journal article" date="1997" name="Nature">
        <title>The nucleotide sequence of Saccharomyces cerevisiae chromosome XIII.</title>
        <authorList>
            <person name="Bowman S."/>
            <person name="Churcher C.M."/>
            <person name="Badcock K."/>
            <person name="Brown D."/>
            <person name="Chillingworth T."/>
            <person name="Connor R."/>
            <person name="Dedman K."/>
            <person name="Devlin K."/>
            <person name="Gentles S."/>
            <person name="Hamlin N."/>
            <person name="Hunt S."/>
            <person name="Jagels K."/>
            <person name="Lye G."/>
            <person name="Moule S."/>
            <person name="Odell C."/>
            <person name="Pearson D."/>
            <person name="Rajandream M.A."/>
            <person name="Rice P."/>
            <person name="Skelton J."/>
            <person name="Walsh S.V."/>
            <person name="Whitehead S."/>
            <person name="Barrell B.G."/>
        </authorList>
    </citation>
    <scope>NUCLEOTIDE SEQUENCE [LARGE SCALE GENOMIC DNA]</scope>
    <source>
        <strain>ATCC 204508 / S288c</strain>
    </source>
</reference>
<reference key="3">
    <citation type="journal article" date="2014" name="G3 (Bethesda)">
        <title>The reference genome sequence of Saccharomyces cerevisiae: Then and now.</title>
        <authorList>
            <person name="Engel S.R."/>
            <person name="Dietrich F.S."/>
            <person name="Fisk D.G."/>
            <person name="Binkley G."/>
            <person name="Balakrishnan R."/>
            <person name="Costanzo M.C."/>
            <person name="Dwight S.S."/>
            <person name="Hitz B.C."/>
            <person name="Karra K."/>
            <person name="Nash R.S."/>
            <person name="Weng S."/>
            <person name="Wong E.D."/>
            <person name="Lloyd P."/>
            <person name="Skrzypek M.S."/>
            <person name="Miyasato S.R."/>
            <person name="Simison M."/>
            <person name="Cherry J.M."/>
        </authorList>
    </citation>
    <scope>GENOME REANNOTATION</scope>
    <source>
        <strain>ATCC 204508 / S288c</strain>
    </source>
</reference>
<reference key="4">
    <citation type="journal article" date="2003" name="Nature">
        <title>Global analysis of protein expression in yeast.</title>
        <authorList>
            <person name="Ghaemmaghami S."/>
            <person name="Huh W.-K."/>
            <person name="Bower K."/>
            <person name="Howson R.W."/>
            <person name="Belle A."/>
            <person name="Dephoure N."/>
            <person name="O'Shea E.K."/>
            <person name="Weissman J.S."/>
        </authorList>
    </citation>
    <scope>LEVEL OF PROTEIN EXPRESSION [LARGE SCALE ANALYSIS]</scope>
</reference>
<reference key="5">
    <citation type="journal article" date="1992" name="Biochem. Biophys. Res. Commun.">
        <title>Computer modeling of two inorganic pyrophosphatases.</title>
        <authorList>
            <person name="Vihinen M."/>
            <person name="Lundin M."/>
            <person name="Baltscheffsky H."/>
        </authorList>
    </citation>
    <scope>3D-STRUCTURE MODELING</scope>
</reference>
<keyword id="KW-0378">Hydrolase</keyword>
<keyword id="KW-0460">Magnesium</keyword>
<keyword id="KW-0479">Metal-binding</keyword>
<keyword id="KW-0496">Mitochondrion</keyword>
<keyword id="KW-1185">Reference proteome</keyword>
<keyword id="KW-0809">Transit peptide</keyword>
<evidence type="ECO:0000250" key="1"/>
<evidence type="ECO:0000255" key="2"/>
<evidence type="ECO:0000269" key="3">
    <source>
    </source>
</evidence>
<evidence type="ECO:0000269" key="4">
    <source>
    </source>
</evidence>
<evidence type="ECO:0000305" key="5"/>
<evidence type="ECO:0000305" key="6">
    <source>
    </source>
</evidence>
<feature type="transit peptide" description="Mitochondrion" evidence="2">
    <location>
        <begin position="1"/>
        <end position="30"/>
    </location>
</feature>
<feature type="chain" id="PRO_0000025413" description="Inorganic pyrophosphatase, mitochondrial">
    <location>
        <begin position="31"/>
        <end position="310"/>
    </location>
</feature>
<feature type="binding site" evidence="1">
    <location>
        <position position="152"/>
    </location>
    <ligand>
        <name>Mg(2+)</name>
        <dbReference type="ChEBI" id="CHEBI:18420"/>
        <label>1</label>
    </ligand>
</feature>
<feature type="binding site" evidence="1">
    <location>
        <position position="157"/>
    </location>
    <ligand>
        <name>Mg(2+)</name>
        <dbReference type="ChEBI" id="CHEBI:18420"/>
        <label>1</label>
    </ligand>
</feature>
<feature type="binding site" evidence="1">
    <location>
        <position position="157"/>
    </location>
    <ligand>
        <name>Mg(2+)</name>
        <dbReference type="ChEBI" id="CHEBI:18420"/>
        <label>2</label>
    </ligand>
</feature>
<feature type="binding site" evidence="1">
    <location>
        <position position="189"/>
    </location>
    <ligand>
        <name>Mg(2+)</name>
        <dbReference type="ChEBI" id="CHEBI:18420"/>
        <label>1</label>
    </ligand>
</feature>
<gene>
    <name type="primary">PPA2</name>
    <name type="synonym">IPP2</name>
    <name type="ordered locus">YMR267W</name>
    <name type="ORF">YM8156.09</name>
</gene>
<sequence length="310" mass="35573">MNLLRMNALTSKARSIERLKQTLNILSIRNHRQFSTIQQGSKYTLGFKKYLTLLNGEVGSFFHDVPLDLNEHEKTVNMIVEVPRWTTGKFEISKELRFNPIVQDTKNGKLRFVNNIFPYHGYIHNYGAIPQTWEDPTIEHKLGKCDVALKGDNDPLDCCEIGSDVLEMGSIKKVKVLGSLALIDDGELDWKVIVIDVNDPLSSKIDDLEKIEEYFPGILDTTREWFRKYKVPAGKPLNSFAFHEQYQNSNKTIQTIKKCHNSWKNLISGSLQEKYDNLPNTERAGNGVTLEDSVKPPSQIPPEVQKWYYV</sequence>
<protein>
    <recommendedName>
        <fullName>Inorganic pyrophosphatase, mitochondrial</fullName>
        <ecNumber evidence="6">3.6.1.1</ecNumber>
    </recommendedName>
    <alternativeName>
        <fullName>Pyrophosphate phospho-hydrolase</fullName>
        <shortName>PPase</shortName>
    </alternativeName>
</protein>
<name>IPYR2_YEAST</name>
<comment type="function">
    <text evidence="4">Involved in energy production. Its activity is stimulated by uncouplers of ATP synthesis.</text>
</comment>
<comment type="catalytic activity">
    <reaction evidence="6">
        <text>diphosphate + H2O = 2 phosphate + H(+)</text>
        <dbReference type="Rhea" id="RHEA:24576"/>
        <dbReference type="ChEBI" id="CHEBI:15377"/>
        <dbReference type="ChEBI" id="CHEBI:15378"/>
        <dbReference type="ChEBI" id="CHEBI:33019"/>
        <dbReference type="ChEBI" id="CHEBI:43474"/>
        <dbReference type="EC" id="3.6.1.1"/>
    </reaction>
    <physiologicalReaction direction="left-to-right" evidence="6">
        <dbReference type="Rhea" id="RHEA:24577"/>
    </physiologicalReaction>
</comment>
<comment type="cofactor">
    <cofactor evidence="1">
        <name>Mg(2+)</name>
        <dbReference type="ChEBI" id="CHEBI:18420"/>
    </cofactor>
</comment>
<comment type="subunit">
    <text evidence="1">Homodimer that binds non-covalently to a protein complex in the inner mitochondrial membrane.</text>
</comment>
<comment type="subcellular location">
    <subcellularLocation>
        <location>Mitochondrion</location>
    </subcellularLocation>
</comment>
<comment type="miscellaneous">
    <text evidence="3">Present with 195 molecules/cell in log phase SD medium.</text>
</comment>
<comment type="similarity">
    <text evidence="5">Belongs to the PPase family.</text>
</comment>
<accession>P28239</accession>
<accession>D6W093</accession>
<organism>
    <name type="scientific">Saccharomyces cerevisiae (strain ATCC 204508 / S288c)</name>
    <name type="common">Baker's yeast</name>
    <dbReference type="NCBI Taxonomy" id="559292"/>
    <lineage>
        <taxon>Eukaryota</taxon>
        <taxon>Fungi</taxon>
        <taxon>Dikarya</taxon>
        <taxon>Ascomycota</taxon>
        <taxon>Saccharomycotina</taxon>
        <taxon>Saccharomycetes</taxon>
        <taxon>Saccharomycetales</taxon>
        <taxon>Saccharomycetaceae</taxon>
        <taxon>Saccharomyces</taxon>
    </lineage>
</organism>